<keyword id="KW-0547">Nucleotide-binding</keyword>
<keyword id="KW-0548">Nucleotidyltransferase</keyword>
<keyword id="KW-0694">RNA-binding</keyword>
<keyword id="KW-0696">RNA-directed RNA polymerase</keyword>
<keyword id="KW-0808">Transferase</keyword>
<keyword id="KW-0693">Viral RNA replication</keyword>
<keyword id="KW-0946">Virion</keyword>
<dbReference type="EC" id="2.7.7.48"/>
<dbReference type="EMBL" id="M97203">
    <property type="status" value="NOT_ANNOTATED_CDS"/>
    <property type="molecule type" value="Genomic_RNA"/>
</dbReference>
<dbReference type="PIR" id="A44280">
    <property type="entry name" value="A44280"/>
</dbReference>
<dbReference type="SMR" id="P35942"/>
<dbReference type="GO" id="GO:0044423">
    <property type="term" value="C:virion component"/>
    <property type="evidence" value="ECO:0007669"/>
    <property type="project" value="UniProtKB-KW"/>
</dbReference>
<dbReference type="GO" id="GO:0000166">
    <property type="term" value="F:nucleotide binding"/>
    <property type="evidence" value="ECO:0007669"/>
    <property type="project" value="UniProtKB-KW"/>
</dbReference>
<dbReference type="GO" id="GO:0003723">
    <property type="term" value="F:RNA binding"/>
    <property type="evidence" value="ECO:0007669"/>
    <property type="project" value="UniProtKB-KW"/>
</dbReference>
<dbReference type="GO" id="GO:0003968">
    <property type="term" value="F:RNA-directed RNA polymerase activity"/>
    <property type="evidence" value="ECO:0007669"/>
    <property type="project" value="UniProtKB-KW"/>
</dbReference>
<dbReference type="GO" id="GO:0006351">
    <property type="term" value="P:DNA-templated transcription"/>
    <property type="evidence" value="ECO:0007669"/>
    <property type="project" value="InterPro"/>
</dbReference>
<dbReference type="GO" id="GO:0019079">
    <property type="term" value="P:viral genome replication"/>
    <property type="evidence" value="ECO:0007669"/>
    <property type="project" value="InterPro"/>
</dbReference>
<dbReference type="Gene3D" id="1.10.357.80">
    <property type="match status" value="1"/>
</dbReference>
<dbReference type="Gene3D" id="3.30.70.2480">
    <property type="match status" value="1"/>
</dbReference>
<dbReference type="InterPro" id="IPR043502">
    <property type="entry name" value="DNA/RNA_pol_sf"/>
</dbReference>
<dbReference type="InterPro" id="IPR001795">
    <property type="entry name" value="RNA-dir_pol_luteovirus"/>
</dbReference>
<dbReference type="InterPro" id="IPR007097">
    <property type="entry name" value="RNA-dir_pol_reovirus"/>
</dbReference>
<dbReference type="Pfam" id="PF02123">
    <property type="entry name" value="RdRP_4"/>
    <property type="match status" value="1"/>
</dbReference>
<dbReference type="SUPFAM" id="SSF56672">
    <property type="entry name" value="DNA/RNA polymerases"/>
    <property type="match status" value="1"/>
</dbReference>
<dbReference type="PROSITE" id="PS50523">
    <property type="entry name" value="RDRP_DSRNA_REO"/>
    <property type="match status" value="1"/>
</dbReference>
<reference key="1">
    <citation type="journal article" date="1993" name="Virology">
        <title>Sequence analysis of group B rotavirus gene 1 and definition of a rotavirus-specific sequence motif within the RNA polymerase gene.</title>
        <authorList>
            <person name="Eiden J.J."/>
            <person name="Hirshon C."/>
        </authorList>
    </citation>
    <scope>NUCLEOTIDE SEQUENCE [GENOMIC RNA]</scope>
</reference>
<organismHost>
    <name type="scientific">Homo sapiens</name>
    <name type="common">Human</name>
    <dbReference type="NCBI Taxonomy" id="9606"/>
</organismHost>
<organismHost>
    <name type="scientific">Rattus norvegicus</name>
    <name type="common">Rat</name>
    <dbReference type="NCBI Taxonomy" id="10116"/>
</organismHost>
<feature type="chain" id="PRO_0000149530" description="RNA-directed RNA polymerase">
    <location>
        <begin position="1"/>
        <end position="1159"/>
    </location>
</feature>
<feature type="domain" description="RdRp catalytic" evidence="2">
    <location>
        <begin position="545"/>
        <end position="727"/>
    </location>
</feature>
<name>RDRP_ROTGI</name>
<proteinExistence type="inferred from homology"/>
<evidence type="ECO:0000250" key="1"/>
<evidence type="ECO:0000255" key="2">
    <source>
        <dbReference type="PROSITE-ProRule" id="PRU00539"/>
    </source>
</evidence>
<evidence type="ECO:0000305" key="3"/>
<comment type="function">
    <text evidence="2">RNA-directed RNA polymerase that is involved in both transcription and genome replication. Together with VP3 capping enzyme, forms an enzyme complex positioned near the channels situated at each of the five-fold vertices of the core. Following infection, the outermost layer of the virus is lost, leaving a double-layered particle (DLP) made up of the core and VP6 shell. VP1 then catalyzes the transcription of fully conservative plus-strand genomic RNAs that are extruded through the DLP's channels into the cytoplasm where they function as mRNAs for translation of viral proteins. One copy of each of the viral (+)RNAs is also recruited during core assembly, together with newly synthesized polymerase complexes and VP2. The polymerase of these novo-formed particles catalyzes the synthesis of complementary minus-strands leading to dsDNA formation. To do so, the polymerase specifically recognizes conserved 3' sequence(s) in plus-strand RNA templates. Once dsRNA synthesis is complete, the polymerase switches to the transcriptional mode, thus providing secondary transcription (By similarity).</text>
</comment>
<comment type="catalytic activity">
    <reaction evidence="2">
        <text>RNA(n) + a ribonucleoside 5'-triphosphate = RNA(n+1) + diphosphate</text>
        <dbReference type="Rhea" id="RHEA:21248"/>
        <dbReference type="Rhea" id="RHEA-COMP:14527"/>
        <dbReference type="Rhea" id="RHEA-COMP:17342"/>
        <dbReference type="ChEBI" id="CHEBI:33019"/>
        <dbReference type="ChEBI" id="CHEBI:61557"/>
        <dbReference type="ChEBI" id="CHEBI:140395"/>
        <dbReference type="EC" id="2.7.7.48"/>
    </reaction>
</comment>
<comment type="subunit">
    <text evidence="1 3">Interacts with VP3 (Potential). Interacts with VP2 (Potential). Interacts with NSP5; this interaction is probably necessary for the formation of functional virus factories (By similarity).</text>
</comment>
<comment type="subcellular location">
    <subcellularLocation>
        <location evidence="3">Virion</location>
    </subcellularLocation>
    <text evidence="1">Attached inside the inner capsid as a minor component. Also found in spherical cytoplasmic structures, called virus factories, that appear early after infection and are the site of viral replication and packaging (By similarity).</text>
</comment>
<comment type="similarity">
    <text evidence="3">Belongs to the reoviridae RNA-directed RNA polymerase family.</text>
</comment>
<organism>
    <name type="scientific">Rotavirus B (isolate RVB/Rat/United States/IDIR/1984/G1P[X])</name>
    <name type="common">RV-B</name>
    <name type="synonym">Rotavirus B (isolate infectious diarrhea of infant rats)</name>
    <dbReference type="NCBI Taxonomy" id="28877"/>
    <lineage>
        <taxon>Viruses</taxon>
        <taxon>Riboviria</taxon>
        <taxon>Orthornavirae</taxon>
        <taxon>Duplornaviricota</taxon>
        <taxon>Resentoviricetes</taxon>
        <taxon>Reovirales</taxon>
        <taxon>Sedoreoviridae</taxon>
        <taxon>Rotavirus</taxon>
        <taxon>Rotavirus B</taxon>
    </lineage>
</organism>
<accession>P35942</accession>
<sequence length="1159" mass="131650">MDSFQFFEWLLRDIERNLLYTSLVYTNPKIAIVRYEPSENAKLWRSKELNTDSPNELLLTLKKTLDECSTLDEKIETLLRIRYFTVYVGDKSDKRNIIRSWLSTTINRLNVEEYASIQEIELQAKQWRAENAKSLRPYHYNIPINEYLRDNEIEVLDTGDNRWKSDTLQGLLPNFYHRTHTLIGAILFAVTSRLEIYSYEQKKALRYLLRTIEKCYNEGYLEMSRDRKWSHTLPELRTLTFRLYNSKVIHAACAMISLVHANPIDYEFLCQVVAVYQIIPANAAKLLSTPMTLYVGVATFSSNQVASTGNASECAPLQIENNIYVSEAQKKEWAESFKSDPLNKSRMLKLMNENLNTTLDKFSLIFNCFSSTFHVGHRIDNAQDAITDQVTATYTSNVNREMYDSYYYKLKQMLKEEIVQYVEDHVAKQYKDVTAESLSALANSSNGFSKEVKFIDRNIKTTKKILHLDNDLITNDYSDLSKALSHGIPMGTRNVPARQTRGIFILPWQVAAVQHTIAESLYKRAKKGAYQGSFAEAYTAKTASLTYGVLAEDTSKATKIILYTDVSQWDASQHNTEPYRSAWINAIREARAELKWRYDDEPKVLEMNVLDSMIKIQEYLLNSNLVVASPGSQRPTKIIRYHGVASGEKTTKIGNSFANVALIETVLDFAKTDIPDLEISHLRVDGDDNVVSINTSCTIDRLQRIIKEKYSSLNARVKALASYTGLEMAKRFIICGKIFERGAIPIFTAERPYGTDVSIQSMCGSSIYSSAVNAYRGFGDAYFSFMQDVLVPPSASTRITGRLRVLMSPVTLYATGPLSFEITPQGLGGRCRFFTQSAKLFTLFKMLTQTAAVSITPDEIKKYAETVQFKKRTEVMIASMQRKLLVPAKALARIIVDKEQQKTLGVPNVQSQKNRSQVSKAIEILGVPERNDIVAKGYYPEELYSLIISHSVVVYTSHSTPISIYRVNCEPVELLRSQLGIRIADSKPIAKPTNHLYDIVSGLSPIKISPSDLLTQAKKYDLSTYKGKRDYLSDLGLVGNTLKTYLASKMLFRDLLMSKYDDLYSTPGFGATQLTTIPLDVTSAEKVFSIRLGLPPHLYEVVMLLLLYEYIHYVFSCKRTFTAQMHAISQEQSAVITKNIILMLDNIQLDQVSFSDDAW</sequence>
<protein>
    <recommendedName>
        <fullName>RNA-directed RNA polymerase</fullName>
        <ecNumber>2.7.7.48</ecNumber>
    </recommendedName>
    <alternativeName>
        <fullName>Protein VP1</fullName>
    </alternativeName>
</protein>